<protein>
    <recommendedName>
        <fullName>Class E vacuolar protein-sorting machinery protein hse1</fullName>
    </recommendedName>
</protein>
<organism>
    <name type="scientific">Neosartorya fischeri (strain ATCC 1020 / DSM 3700 / CBS 544.65 / FGSC A1164 / JCM 1740 / NRRL 181 / WB 181)</name>
    <name type="common">Aspergillus fischerianus</name>
    <dbReference type="NCBI Taxonomy" id="331117"/>
    <lineage>
        <taxon>Eukaryota</taxon>
        <taxon>Fungi</taxon>
        <taxon>Dikarya</taxon>
        <taxon>Ascomycota</taxon>
        <taxon>Pezizomycotina</taxon>
        <taxon>Eurotiomycetes</taxon>
        <taxon>Eurotiomycetidae</taxon>
        <taxon>Eurotiales</taxon>
        <taxon>Aspergillaceae</taxon>
        <taxon>Aspergillus</taxon>
        <taxon>Aspergillus subgen. Fumigati</taxon>
    </lineage>
</organism>
<dbReference type="EMBL" id="DS027696">
    <property type="protein sequence ID" value="EAW18192.1"/>
    <property type="molecule type" value="Genomic_DNA"/>
</dbReference>
<dbReference type="RefSeq" id="XP_001260089.1">
    <property type="nucleotide sequence ID" value="XM_001260088.1"/>
</dbReference>
<dbReference type="SMR" id="A1DFN5"/>
<dbReference type="STRING" id="331117.A1DFN5"/>
<dbReference type="EnsemblFungi" id="EAW18192">
    <property type="protein sequence ID" value="EAW18192"/>
    <property type="gene ID" value="NFIA_081360"/>
</dbReference>
<dbReference type="GeneID" id="4586645"/>
<dbReference type="KEGG" id="nfi:NFIA_081360"/>
<dbReference type="VEuPathDB" id="FungiDB:NFIA_081360"/>
<dbReference type="eggNOG" id="KOG2199">
    <property type="taxonomic scope" value="Eukaryota"/>
</dbReference>
<dbReference type="HOGENOM" id="CLU_010104_1_1_1"/>
<dbReference type="OMA" id="QVYRDWW"/>
<dbReference type="OrthoDB" id="10255964at2759"/>
<dbReference type="Proteomes" id="UP000006702">
    <property type="component" value="Unassembled WGS sequence"/>
</dbReference>
<dbReference type="GO" id="GO:0010008">
    <property type="term" value="C:endosome membrane"/>
    <property type="evidence" value="ECO:0007669"/>
    <property type="project" value="UniProtKB-SubCell"/>
</dbReference>
<dbReference type="GO" id="GO:0033565">
    <property type="term" value="C:ESCRT-0 complex"/>
    <property type="evidence" value="ECO:0007669"/>
    <property type="project" value="TreeGrafter"/>
</dbReference>
<dbReference type="GO" id="GO:0035091">
    <property type="term" value="F:phosphatidylinositol binding"/>
    <property type="evidence" value="ECO:0007669"/>
    <property type="project" value="InterPro"/>
</dbReference>
<dbReference type="GO" id="GO:0043130">
    <property type="term" value="F:ubiquitin binding"/>
    <property type="evidence" value="ECO:0007669"/>
    <property type="project" value="InterPro"/>
</dbReference>
<dbReference type="GO" id="GO:0043328">
    <property type="term" value="P:protein transport to vacuole involved in ubiquitin-dependent protein catabolic process via the multivesicular body sorting pathway"/>
    <property type="evidence" value="ECO:0007669"/>
    <property type="project" value="TreeGrafter"/>
</dbReference>
<dbReference type="CDD" id="cd21386">
    <property type="entry name" value="GAT_Hse1"/>
    <property type="match status" value="1"/>
</dbReference>
<dbReference type="CDD" id="cd11805">
    <property type="entry name" value="SH3_GRB2_like_C"/>
    <property type="match status" value="1"/>
</dbReference>
<dbReference type="CDD" id="cd16978">
    <property type="entry name" value="VHS_HSE1"/>
    <property type="match status" value="1"/>
</dbReference>
<dbReference type="FunFam" id="2.30.30.40:FF:000072">
    <property type="entry name" value="Unconventional Myosin IB"/>
    <property type="match status" value="1"/>
</dbReference>
<dbReference type="Gene3D" id="1.20.5.1940">
    <property type="match status" value="1"/>
</dbReference>
<dbReference type="Gene3D" id="1.25.40.90">
    <property type="match status" value="1"/>
</dbReference>
<dbReference type="Gene3D" id="2.30.30.40">
    <property type="entry name" value="SH3 Domains"/>
    <property type="match status" value="1"/>
</dbReference>
<dbReference type="InterPro" id="IPR008942">
    <property type="entry name" value="ENTH_VHS"/>
</dbReference>
<dbReference type="InterPro" id="IPR004152">
    <property type="entry name" value="GAT_dom"/>
</dbReference>
<dbReference type="InterPro" id="IPR036028">
    <property type="entry name" value="SH3-like_dom_sf"/>
</dbReference>
<dbReference type="InterPro" id="IPR001452">
    <property type="entry name" value="SH3_domain"/>
</dbReference>
<dbReference type="InterPro" id="IPR050670">
    <property type="entry name" value="STAM"/>
</dbReference>
<dbReference type="InterPro" id="IPR002014">
    <property type="entry name" value="VHS_dom"/>
</dbReference>
<dbReference type="PANTHER" id="PTHR45929">
    <property type="entry name" value="JAK PATHWAY SIGNAL TRANSDUCTION ADAPTOR MOLECULE"/>
    <property type="match status" value="1"/>
</dbReference>
<dbReference type="PANTHER" id="PTHR45929:SF3">
    <property type="entry name" value="JAK PATHWAY SIGNAL TRANSDUCTION ADAPTOR MOLECULE"/>
    <property type="match status" value="1"/>
</dbReference>
<dbReference type="Pfam" id="PF03127">
    <property type="entry name" value="GAT"/>
    <property type="match status" value="1"/>
</dbReference>
<dbReference type="Pfam" id="PF00018">
    <property type="entry name" value="SH3_1"/>
    <property type="match status" value="1"/>
</dbReference>
<dbReference type="Pfam" id="PF00790">
    <property type="entry name" value="VHS"/>
    <property type="match status" value="1"/>
</dbReference>
<dbReference type="PRINTS" id="PR00452">
    <property type="entry name" value="SH3DOMAIN"/>
</dbReference>
<dbReference type="PRINTS" id="PR01887">
    <property type="entry name" value="SPECTRNALPHA"/>
</dbReference>
<dbReference type="SMART" id="SM00326">
    <property type="entry name" value="SH3"/>
    <property type="match status" value="1"/>
</dbReference>
<dbReference type="SMART" id="SM00288">
    <property type="entry name" value="VHS"/>
    <property type="match status" value="1"/>
</dbReference>
<dbReference type="SUPFAM" id="SSF48464">
    <property type="entry name" value="ENTH/VHS domain"/>
    <property type="match status" value="1"/>
</dbReference>
<dbReference type="SUPFAM" id="SSF50044">
    <property type="entry name" value="SH3-domain"/>
    <property type="match status" value="1"/>
</dbReference>
<dbReference type="PROSITE" id="PS50002">
    <property type="entry name" value="SH3"/>
    <property type="match status" value="1"/>
</dbReference>
<dbReference type="PROSITE" id="PS50179">
    <property type="entry name" value="VHS"/>
    <property type="match status" value="1"/>
</dbReference>
<accession>A1DFN5</accession>
<gene>
    <name type="primary">hse1</name>
    <name type="ORF">NFIA_081360</name>
</gene>
<evidence type="ECO:0000250" key="1"/>
<evidence type="ECO:0000255" key="2">
    <source>
        <dbReference type="PROSITE-ProRule" id="PRU00192"/>
    </source>
</evidence>
<evidence type="ECO:0000255" key="3">
    <source>
        <dbReference type="PROSITE-ProRule" id="PRU00218"/>
    </source>
</evidence>
<evidence type="ECO:0000256" key="4">
    <source>
        <dbReference type="SAM" id="MobiDB-lite"/>
    </source>
</evidence>
<evidence type="ECO:0000305" key="5"/>
<reference key="1">
    <citation type="journal article" date="2008" name="PLoS Genet.">
        <title>Genomic islands in the pathogenic filamentous fungus Aspergillus fumigatus.</title>
        <authorList>
            <person name="Fedorova N.D."/>
            <person name="Khaldi N."/>
            <person name="Joardar V.S."/>
            <person name="Maiti R."/>
            <person name="Amedeo P."/>
            <person name="Anderson M.J."/>
            <person name="Crabtree J."/>
            <person name="Silva J.C."/>
            <person name="Badger J.H."/>
            <person name="Albarraq A."/>
            <person name="Angiuoli S."/>
            <person name="Bussey H."/>
            <person name="Bowyer P."/>
            <person name="Cotty P.J."/>
            <person name="Dyer P.S."/>
            <person name="Egan A."/>
            <person name="Galens K."/>
            <person name="Fraser-Liggett C.M."/>
            <person name="Haas B.J."/>
            <person name="Inman J.M."/>
            <person name="Kent R."/>
            <person name="Lemieux S."/>
            <person name="Malavazi I."/>
            <person name="Orvis J."/>
            <person name="Roemer T."/>
            <person name="Ronning C.M."/>
            <person name="Sundaram J.P."/>
            <person name="Sutton G."/>
            <person name="Turner G."/>
            <person name="Venter J.C."/>
            <person name="White O.R."/>
            <person name="Whitty B.R."/>
            <person name="Youngman P."/>
            <person name="Wolfe K.H."/>
            <person name="Goldman G.H."/>
            <person name="Wortman J.R."/>
            <person name="Jiang B."/>
            <person name="Denning D.W."/>
            <person name="Nierman W.C."/>
        </authorList>
    </citation>
    <scope>NUCLEOTIDE SEQUENCE [LARGE SCALE GENOMIC DNA]</scope>
    <source>
        <strain>ATCC 1020 / DSM 3700 / CBS 544.65 / FGSC A1164 / JCM 1740 / NRRL 181 / WB 181</strain>
    </source>
</reference>
<proteinExistence type="inferred from homology"/>
<sequence>MFRAQQNAFDDAVAKATDENLTSENWEYILDVCDKVAAEESGAKDAVAAMIKRLAHRNANVQLYTLELANALAQNCGPKIHRELASRSFTDALLRLANDRNTHQQVKPKILERMQEWAQMFANNPDFGIMEQAYMKLKTQNPNLQPPSKPGKREITEADRQKEEEELQMALALSIREKPSAAPEPKAEPSTSASVPASQTQAATSQAVPPGTSAATVSRVRALFDFQPSEPGELQFRKGDIIAVLESVYKDWWKGSLRGQTGIFPLNYVEKLPDPTVEELQREAQMEAEVFGQIKNVEKLLTLLSTRSSELNVQDNEEITALYHSTLSIRPKLIELIGKYSQKKDEFTQLNEKFIKARRDYESLLEASMSHPAQPQYGRPGQTPYGYPGPAAPLGYPQGPPQSDPQRYFSPRPQDQTHMYPPTSHSPDPRGRTPPAGPSFPQHQQPPPDSYQPVHHRPESTYDNPQELGTSVYDSPVEHPSSSQRLPYPPSGAPVPPGVHQQFQHQQQEYPPSGYPPEDASKPPTAGFASQPPQQTLQQPPYPTAPVAHQPPPSHQPPPVPSTASKPTPYPSLTPGTPSGGEYQAYNPSQAGAANSNPNSYYR</sequence>
<keyword id="KW-0967">Endosome</keyword>
<keyword id="KW-0472">Membrane</keyword>
<keyword id="KW-0653">Protein transport</keyword>
<keyword id="KW-1185">Reference proteome</keyword>
<keyword id="KW-0728">SH3 domain</keyword>
<keyword id="KW-0813">Transport</keyword>
<comment type="function">
    <text evidence="1">Component of the ESCRT-0 complex which is the sorting receptor for ubiquitinated cargo proteins at the multivesicular body (MVB).</text>
</comment>
<comment type="subunit">
    <text evidence="1">Component of the ESCRT-0 complex composed of HSE1 and VPS27.</text>
</comment>
<comment type="subcellular location">
    <subcellularLocation>
        <location evidence="1">Endosome membrane</location>
        <topology evidence="1">Peripheral membrane protein</topology>
        <orientation evidence="1">Cytoplasmic side</orientation>
    </subcellularLocation>
</comment>
<comment type="similarity">
    <text evidence="5">Belongs to the STAM family.</text>
</comment>
<name>HSE1_NEOFI</name>
<feature type="chain" id="PRO_0000292499" description="Class E vacuolar protein-sorting machinery protein hse1">
    <location>
        <begin position="1"/>
        <end position="603"/>
    </location>
</feature>
<feature type="domain" description="VHS" evidence="3">
    <location>
        <begin position="16"/>
        <end position="145"/>
    </location>
</feature>
<feature type="domain" description="UIM" evidence="5">
    <location>
        <begin position="162"/>
        <end position="181"/>
    </location>
</feature>
<feature type="domain" description="SH3" evidence="2">
    <location>
        <begin position="215"/>
        <end position="274"/>
    </location>
</feature>
<feature type="region of interest" description="Disordered" evidence="4">
    <location>
        <begin position="140"/>
        <end position="164"/>
    </location>
</feature>
<feature type="region of interest" description="Disordered" evidence="4">
    <location>
        <begin position="177"/>
        <end position="212"/>
    </location>
</feature>
<feature type="region of interest" description="Disordered" evidence="4">
    <location>
        <begin position="371"/>
        <end position="603"/>
    </location>
</feature>
<feature type="compositionally biased region" description="Basic and acidic residues" evidence="4">
    <location>
        <begin position="151"/>
        <end position="163"/>
    </location>
</feature>
<feature type="compositionally biased region" description="Low complexity" evidence="4">
    <location>
        <begin position="180"/>
        <end position="210"/>
    </location>
</feature>
<feature type="compositionally biased region" description="Low complexity" evidence="4">
    <location>
        <begin position="374"/>
        <end position="397"/>
    </location>
</feature>
<feature type="compositionally biased region" description="Polar residues" evidence="4">
    <location>
        <begin position="461"/>
        <end position="473"/>
    </location>
</feature>
<feature type="compositionally biased region" description="Pro residues" evidence="4">
    <location>
        <begin position="487"/>
        <end position="497"/>
    </location>
</feature>
<feature type="compositionally biased region" description="Low complexity" evidence="4">
    <location>
        <begin position="498"/>
        <end position="508"/>
    </location>
</feature>
<feature type="compositionally biased region" description="Pro residues" evidence="4">
    <location>
        <begin position="540"/>
        <end position="561"/>
    </location>
</feature>
<feature type="compositionally biased region" description="Polar residues" evidence="4">
    <location>
        <begin position="586"/>
        <end position="603"/>
    </location>
</feature>